<gene>
    <name evidence="1" type="primary">glsA</name>
    <name type="ordered locus">Pcryo_1330</name>
</gene>
<proteinExistence type="inferred from homology"/>
<accession>Q1QB42</accession>
<name>GLSA_PSYCK</name>
<sequence length="306" mass="32953">MQQILNDIAAEMALETDRGKVADYIPQLAHVDPNQFGIAVATPDGQVYVAGDASTLFSIQSISKVFTLTIGLGKLGDAIWTHVGREPSGDPFNSITVLEFESGRPRNPFINAGAIAVVDAIMMGHEPKETLGEILRFVHFIADDDSIRFDHKVAASEMDHRDRNAALAHFMKSFGHIKHDVDKVLGVYFHQCAIAMSCEQLARAGLFLVSNGVNQHTGIRVINAQQSRRINSLMMMCGHYDGAGEFAYRVGLPGKSGVGGGILTIAPGKGSIAVWSPGLDHVGNSKLGSKALELLVQKTGWSVFSN</sequence>
<dbReference type="EC" id="3.5.1.2" evidence="1"/>
<dbReference type="EMBL" id="CP000323">
    <property type="protein sequence ID" value="ABE75111.1"/>
    <property type="molecule type" value="Genomic_DNA"/>
</dbReference>
<dbReference type="RefSeq" id="WP_011513663.1">
    <property type="nucleotide sequence ID" value="NC_007969.1"/>
</dbReference>
<dbReference type="SMR" id="Q1QB42"/>
<dbReference type="STRING" id="335284.Pcryo_1330"/>
<dbReference type="KEGG" id="pcr:Pcryo_1330"/>
<dbReference type="eggNOG" id="COG2066">
    <property type="taxonomic scope" value="Bacteria"/>
</dbReference>
<dbReference type="HOGENOM" id="CLU_027932_1_1_6"/>
<dbReference type="Proteomes" id="UP000002425">
    <property type="component" value="Chromosome"/>
</dbReference>
<dbReference type="GO" id="GO:0004359">
    <property type="term" value="F:glutaminase activity"/>
    <property type="evidence" value="ECO:0007669"/>
    <property type="project" value="UniProtKB-UniRule"/>
</dbReference>
<dbReference type="GO" id="GO:0006537">
    <property type="term" value="P:glutamate biosynthetic process"/>
    <property type="evidence" value="ECO:0007669"/>
    <property type="project" value="TreeGrafter"/>
</dbReference>
<dbReference type="GO" id="GO:0006543">
    <property type="term" value="P:glutamine catabolic process"/>
    <property type="evidence" value="ECO:0007669"/>
    <property type="project" value="TreeGrafter"/>
</dbReference>
<dbReference type="FunFam" id="3.40.710.10:FF:000005">
    <property type="entry name" value="Glutaminase"/>
    <property type="match status" value="1"/>
</dbReference>
<dbReference type="Gene3D" id="3.40.710.10">
    <property type="entry name" value="DD-peptidase/beta-lactamase superfamily"/>
    <property type="match status" value="1"/>
</dbReference>
<dbReference type="HAMAP" id="MF_00313">
    <property type="entry name" value="Glutaminase"/>
    <property type="match status" value="1"/>
</dbReference>
<dbReference type="InterPro" id="IPR012338">
    <property type="entry name" value="Beta-lactam/transpept-like"/>
</dbReference>
<dbReference type="InterPro" id="IPR015868">
    <property type="entry name" value="Glutaminase"/>
</dbReference>
<dbReference type="NCBIfam" id="TIGR03814">
    <property type="entry name" value="Gln_ase"/>
    <property type="match status" value="1"/>
</dbReference>
<dbReference type="NCBIfam" id="NF002132">
    <property type="entry name" value="PRK00971.1-1"/>
    <property type="match status" value="1"/>
</dbReference>
<dbReference type="NCBIfam" id="NF002133">
    <property type="entry name" value="PRK00971.1-2"/>
    <property type="match status" value="1"/>
</dbReference>
<dbReference type="PANTHER" id="PTHR12544">
    <property type="entry name" value="GLUTAMINASE"/>
    <property type="match status" value="1"/>
</dbReference>
<dbReference type="PANTHER" id="PTHR12544:SF29">
    <property type="entry name" value="GLUTAMINASE"/>
    <property type="match status" value="1"/>
</dbReference>
<dbReference type="Pfam" id="PF04960">
    <property type="entry name" value="Glutaminase"/>
    <property type="match status" value="1"/>
</dbReference>
<dbReference type="SUPFAM" id="SSF56601">
    <property type="entry name" value="beta-lactamase/transpeptidase-like"/>
    <property type="match status" value="1"/>
</dbReference>
<protein>
    <recommendedName>
        <fullName evidence="1">Glutaminase</fullName>
        <ecNumber evidence="1">3.5.1.2</ecNumber>
    </recommendedName>
</protein>
<comment type="catalytic activity">
    <reaction evidence="1">
        <text>L-glutamine + H2O = L-glutamate + NH4(+)</text>
        <dbReference type="Rhea" id="RHEA:15889"/>
        <dbReference type="ChEBI" id="CHEBI:15377"/>
        <dbReference type="ChEBI" id="CHEBI:28938"/>
        <dbReference type="ChEBI" id="CHEBI:29985"/>
        <dbReference type="ChEBI" id="CHEBI:58359"/>
        <dbReference type="EC" id="3.5.1.2"/>
    </reaction>
</comment>
<comment type="subunit">
    <text evidence="1">Homotetramer.</text>
</comment>
<comment type="similarity">
    <text evidence="1">Belongs to the glutaminase family.</text>
</comment>
<evidence type="ECO:0000255" key="1">
    <source>
        <dbReference type="HAMAP-Rule" id="MF_00313"/>
    </source>
</evidence>
<feature type="chain" id="PRO_0000336037" description="Glutaminase">
    <location>
        <begin position="1"/>
        <end position="306"/>
    </location>
</feature>
<feature type="binding site" evidence="1">
    <location>
        <position position="61"/>
    </location>
    <ligand>
        <name>substrate</name>
    </ligand>
</feature>
<feature type="binding site" evidence="1">
    <location>
        <position position="111"/>
    </location>
    <ligand>
        <name>substrate</name>
    </ligand>
</feature>
<feature type="binding site" evidence="1">
    <location>
        <position position="157"/>
    </location>
    <ligand>
        <name>substrate</name>
    </ligand>
</feature>
<feature type="binding site" evidence="1">
    <location>
        <position position="164"/>
    </location>
    <ligand>
        <name>substrate</name>
    </ligand>
</feature>
<feature type="binding site" evidence="1">
    <location>
        <position position="188"/>
    </location>
    <ligand>
        <name>substrate</name>
    </ligand>
</feature>
<feature type="binding site" evidence="1">
    <location>
        <position position="240"/>
    </location>
    <ligand>
        <name>substrate</name>
    </ligand>
</feature>
<feature type="binding site" evidence="1">
    <location>
        <position position="258"/>
    </location>
    <ligand>
        <name>substrate</name>
    </ligand>
</feature>
<reference key="1">
    <citation type="submission" date="2006-03" db="EMBL/GenBank/DDBJ databases">
        <title>Complete sequence of chromosome of Psychrobacter cryohalolentis K5.</title>
        <authorList>
            <consortium name="US DOE Joint Genome Institute"/>
            <person name="Copeland A."/>
            <person name="Lucas S."/>
            <person name="Lapidus A."/>
            <person name="Barry K."/>
            <person name="Detter J.C."/>
            <person name="Glavina T."/>
            <person name="Hammon N."/>
            <person name="Israni S."/>
            <person name="Dalin E."/>
            <person name="Tice H."/>
            <person name="Pitluck S."/>
            <person name="Brettin T."/>
            <person name="Bruce D."/>
            <person name="Han C."/>
            <person name="Tapia R."/>
            <person name="Sims D.R."/>
            <person name="Gilna P."/>
            <person name="Schmutz J."/>
            <person name="Larimer F."/>
            <person name="Land M."/>
            <person name="Hauser L."/>
            <person name="Kyrpides N."/>
            <person name="Kim E."/>
            <person name="Richardson P."/>
        </authorList>
    </citation>
    <scope>NUCLEOTIDE SEQUENCE [LARGE SCALE GENOMIC DNA]</scope>
    <source>
        <strain>ATCC BAA-1226 / DSM 17306 / VKM B-2378 / K5</strain>
    </source>
</reference>
<keyword id="KW-0378">Hydrolase</keyword>
<organism>
    <name type="scientific">Psychrobacter cryohalolentis (strain ATCC BAA-1226 / DSM 17306 / VKM B-2378 / K5)</name>
    <dbReference type="NCBI Taxonomy" id="335284"/>
    <lineage>
        <taxon>Bacteria</taxon>
        <taxon>Pseudomonadati</taxon>
        <taxon>Pseudomonadota</taxon>
        <taxon>Gammaproteobacteria</taxon>
        <taxon>Moraxellales</taxon>
        <taxon>Moraxellaceae</taxon>
        <taxon>Psychrobacter</taxon>
    </lineage>
</organism>